<protein>
    <recommendedName>
        <fullName>Protein MGF 505-10R</fullName>
    </recommendedName>
</protein>
<name>50510_ASFM2</name>
<sequence>MFSLQELCRKNIYILPYPLGEHVLQQLGLYWKGYGSLQRIGDDHVLLQQDLIFSINEALRMAGEEGNNEVVKLLLLWEGNLHYAIIGALEGDRYDLIHKYYGQIGDCHKILPLIQDPQIFEKCHELSTSCNIRCLLEHAVKHNMLSILQKHKDQIRFHLALTQILFELACHERKNDIIRWIGYSLHIYQLETIFDVAFAHKNLSLYVLGYELLMHKVNTEAANIDLPNLLSYHLRTAAAGGLLHFMFETLKHGGYVDKAVLSAAISYKHRKVVAHFIHQVPRKTVEKLLLHAVQTRAPKKTLNLLLSSLNYSVHPITKQLVRNVVDYRSTLIVKLLLMRRKRKLNLVDAVLARLVRYSTYTDTVKFMGEFSVSPEKVIKMAARESRTFMIEMISKAVWKNHPQTMIHHLKQLADTMKPQSGKDLIIYTIHYIYQSSNLLVAEEEKNIFKLAKFYANHNSVNRFKQICEDYYTLDVDTRFKTLILECFEIAVQKNYPRIATIVDDFIRFLFYKGDITEEEISEAYSLKNAELYVDLKWLQQEEN</sequence>
<organismHost>
    <name type="scientific">Ornithodoros</name>
    <name type="common">relapsing fever ticks</name>
    <dbReference type="NCBI Taxonomy" id="6937"/>
</organismHost>
<organismHost>
    <name type="scientific">Phacochoerus aethiopicus</name>
    <name type="common">Warthog</name>
    <dbReference type="NCBI Taxonomy" id="85517"/>
</organismHost>
<organismHost>
    <name type="scientific">Phacochoerus africanus</name>
    <name type="common">Warthog</name>
    <dbReference type="NCBI Taxonomy" id="41426"/>
</organismHost>
<organismHost>
    <name type="scientific">Potamochoerus larvatus</name>
    <name type="common">Bushpig</name>
    <dbReference type="NCBI Taxonomy" id="273792"/>
</organismHost>
<organismHost>
    <name type="scientific">Sus scrofa</name>
    <name type="common">Pig</name>
    <dbReference type="NCBI Taxonomy" id="9823"/>
</organismHost>
<proteinExistence type="inferred from homology"/>
<comment type="function">
    <text evidence="1">Plays a role in virus cell tropism, and may be required for efficient virus replication in macrophages.</text>
</comment>
<comment type="induction">
    <text evidence="2">Expressed in the early phase of the viral replicative cycle.</text>
</comment>
<comment type="similarity">
    <text evidence="2">Belongs to the asfivirus MGF 505 family.</text>
</comment>
<reference key="1">
    <citation type="journal article" date="1994" name="Virology">
        <title>Two novel multigene families, 530 and 300, in the terminal variable regions of African swine fever virus genome.</title>
        <authorList>
            <person name="Yozawa T."/>
            <person name="Kutish G.F."/>
            <person name="Afonso C.L."/>
            <person name="Lu Z."/>
            <person name="Rock D.L."/>
        </authorList>
    </citation>
    <scope>NUCLEOTIDE SEQUENCE [GENOMIC DNA]</scope>
</reference>
<reference key="2">
    <citation type="submission" date="2003-03" db="EMBL/GenBank/DDBJ databases">
        <title>African swine fever virus genomes.</title>
        <authorList>
            <person name="Kutish G.F."/>
            <person name="Rock D.L."/>
        </authorList>
    </citation>
    <scope>NUCLEOTIDE SEQUENCE [LARGE SCALE GENOMIC DNA]</scope>
</reference>
<keyword id="KW-0244">Early protein</keyword>
<organism>
    <name type="scientific">African swine fever virus (isolate Tick/Malawi/Lil 20-1/1983)</name>
    <name type="common">ASFV</name>
    <dbReference type="NCBI Taxonomy" id="10500"/>
    <lineage>
        <taxon>Viruses</taxon>
        <taxon>Varidnaviria</taxon>
        <taxon>Bamfordvirae</taxon>
        <taxon>Nucleocytoviricota</taxon>
        <taxon>Pokkesviricetes</taxon>
        <taxon>Asfuvirales</taxon>
        <taxon>Asfarviridae</taxon>
        <taxon>Asfivirus</taxon>
        <taxon>African swine fever virus</taxon>
    </lineage>
</organism>
<evidence type="ECO:0000250" key="1">
    <source>
        <dbReference type="UniProtKB" id="Q89869"/>
    </source>
</evidence>
<evidence type="ECO:0000305" key="2"/>
<dbReference type="EMBL" id="AY261361">
    <property type="status" value="NOT_ANNOTATED_CDS"/>
    <property type="molecule type" value="Genomic_DNA"/>
</dbReference>
<dbReference type="EMBL" id="U03761">
    <property type="protein sequence ID" value="AAA50527.1"/>
    <property type="molecule type" value="Genomic_DNA"/>
</dbReference>
<dbReference type="SMR" id="Q65114"/>
<dbReference type="Proteomes" id="UP000000860">
    <property type="component" value="Segment"/>
</dbReference>
<dbReference type="InterPro" id="IPR004858">
    <property type="entry name" value="MGF_505"/>
</dbReference>
<dbReference type="Pfam" id="PF03158">
    <property type="entry name" value="DUF249"/>
    <property type="match status" value="1"/>
</dbReference>
<gene>
    <name type="ordered locus">Mal-041</name>
</gene>
<accession>Q65114</accession>
<feature type="chain" id="PRO_0000373351" description="Protein MGF 505-10R">
    <location>
        <begin position="1"/>
        <end position="543"/>
    </location>
</feature>